<proteinExistence type="inferred from homology"/>
<accession>Q5L222</accession>
<comment type="function">
    <text evidence="1">Part of the ABC transporter complex PotABCD involved in spermidine/putrescine import. Responsible for energy coupling to the transport system.</text>
</comment>
<comment type="catalytic activity">
    <reaction evidence="1">
        <text>ATP + H2O + polyamine-[polyamine-binding protein]Side 1 = ADP + phosphate + polyamineSide 2 + [polyamine-binding protein]Side 1.</text>
        <dbReference type="EC" id="7.6.2.11"/>
    </reaction>
</comment>
<comment type="subunit">
    <text evidence="1">The complex is composed of two ATP-binding proteins (PotA), two transmembrane proteins (PotB and PotC) and a solute-binding protein (PotD).</text>
</comment>
<comment type="subcellular location">
    <subcellularLocation>
        <location evidence="1">Cell membrane</location>
        <topology evidence="1">Peripheral membrane protein</topology>
    </subcellularLocation>
</comment>
<comment type="similarity">
    <text evidence="1">Belongs to the ABC transporter superfamily. Spermidine/putrescine importer (TC 3.A.1.11.1) family.</text>
</comment>
<evidence type="ECO:0000255" key="1">
    <source>
        <dbReference type="HAMAP-Rule" id="MF_01726"/>
    </source>
</evidence>
<sequence length="353" mass="40312">MNGEEIIRFERVTKEYDGTVVLDDVSFAMERGKFYTLLGPSGCGKTTILRLIAGFIEPTEGTIYFHGKPIQNVPPNKRQVNTVFQDYALFPHLDVFENVAFGLRVKKMKEADIRQKVSEALRFVNLEGYERRRIQEMSGGQRQRVAIARAIVNEPEVLLLDEPLSALDLKLRTEMQYELRELQRRLGITFIFVTHDQEEALAMSDYIFVLNKGKIQQFGTPKDIYDEPINRFVADFIGESNILSGRMIDDFLVEFAGKQFACVDRGFAPNEPVDVVIRPEDLELAAPEDGQIVIRVDSLLFRGVHYEICGYDENGNEWLVHSTKKAEVGETVGLRFEPEAIHVMRVEREDEGA</sequence>
<gene>
    <name evidence="1" type="primary">potA</name>
    <name type="ordered locus">GK0723</name>
</gene>
<keyword id="KW-0067">ATP-binding</keyword>
<keyword id="KW-1003">Cell membrane</keyword>
<keyword id="KW-0472">Membrane</keyword>
<keyword id="KW-0547">Nucleotide-binding</keyword>
<keyword id="KW-1185">Reference proteome</keyword>
<keyword id="KW-1278">Translocase</keyword>
<keyword id="KW-0813">Transport</keyword>
<organism>
    <name type="scientific">Geobacillus kaustophilus (strain HTA426)</name>
    <dbReference type="NCBI Taxonomy" id="235909"/>
    <lineage>
        <taxon>Bacteria</taxon>
        <taxon>Bacillati</taxon>
        <taxon>Bacillota</taxon>
        <taxon>Bacilli</taxon>
        <taxon>Bacillales</taxon>
        <taxon>Anoxybacillaceae</taxon>
        <taxon>Geobacillus</taxon>
        <taxon>Geobacillus thermoleovorans group</taxon>
    </lineage>
</organism>
<protein>
    <recommendedName>
        <fullName evidence="1">Spermidine/putrescine import ATP-binding protein PotA</fullName>
        <ecNumber evidence="1">7.6.2.11</ecNumber>
    </recommendedName>
</protein>
<feature type="chain" id="PRO_0000286221" description="Spermidine/putrescine import ATP-binding protein PotA">
    <location>
        <begin position="1"/>
        <end position="353"/>
    </location>
</feature>
<feature type="domain" description="ABC transporter" evidence="1">
    <location>
        <begin position="7"/>
        <end position="237"/>
    </location>
</feature>
<feature type="binding site" evidence="1">
    <location>
        <begin position="39"/>
        <end position="46"/>
    </location>
    <ligand>
        <name>ATP</name>
        <dbReference type="ChEBI" id="CHEBI:30616"/>
    </ligand>
</feature>
<name>POTA_GEOKA</name>
<dbReference type="EC" id="7.6.2.11" evidence="1"/>
<dbReference type="EMBL" id="BA000043">
    <property type="protein sequence ID" value="BAD75008.1"/>
    <property type="molecule type" value="Genomic_DNA"/>
</dbReference>
<dbReference type="RefSeq" id="WP_011230226.1">
    <property type="nucleotide sequence ID" value="NC_006510.1"/>
</dbReference>
<dbReference type="SMR" id="Q5L222"/>
<dbReference type="STRING" id="235909.GK0723"/>
<dbReference type="KEGG" id="gka:GK0723"/>
<dbReference type="PATRIC" id="fig|235909.7.peg.804"/>
<dbReference type="eggNOG" id="COG3842">
    <property type="taxonomic scope" value="Bacteria"/>
</dbReference>
<dbReference type="HOGENOM" id="CLU_000604_1_1_9"/>
<dbReference type="Proteomes" id="UP000001172">
    <property type="component" value="Chromosome"/>
</dbReference>
<dbReference type="GO" id="GO:0043190">
    <property type="term" value="C:ATP-binding cassette (ABC) transporter complex"/>
    <property type="evidence" value="ECO:0007669"/>
    <property type="project" value="InterPro"/>
</dbReference>
<dbReference type="GO" id="GO:0015594">
    <property type="term" value="F:ABC-type putrescine transporter activity"/>
    <property type="evidence" value="ECO:0007669"/>
    <property type="project" value="InterPro"/>
</dbReference>
<dbReference type="GO" id="GO:0005524">
    <property type="term" value="F:ATP binding"/>
    <property type="evidence" value="ECO:0007669"/>
    <property type="project" value="UniProtKB-KW"/>
</dbReference>
<dbReference type="GO" id="GO:0016887">
    <property type="term" value="F:ATP hydrolysis activity"/>
    <property type="evidence" value="ECO:0007669"/>
    <property type="project" value="InterPro"/>
</dbReference>
<dbReference type="CDD" id="cd03300">
    <property type="entry name" value="ABC_PotA_N"/>
    <property type="match status" value="1"/>
</dbReference>
<dbReference type="FunFam" id="3.40.50.300:FF:000133">
    <property type="entry name" value="Spermidine/putrescine import ATP-binding protein PotA"/>
    <property type="match status" value="1"/>
</dbReference>
<dbReference type="Gene3D" id="2.40.50.100">
    <property type="match status" value="1"/>
</dbReference>
<dbReference type="Gene3D" id="3.40.50.300">
    <property type="entry name" value="P-loop containing nucleotide triphosphate hydrolases"/>
    <property type="match status" value="1"/>
</dbReference>
<dbReference type="InterPro" id="IPR003593">
    <property type="entry name" value="AAA+_ATPase"/>
</dbReference>
<dbReference type="InterPro" id="IPR050093">
    <property type="entry name" value="ABC_SmlMolc_Importer"/>
</dbReference>
<dbReference type="InterPro" id="IPR003439">
    <property type="entry name" value="ABC_transporter-like_ATP-bd"/>
</dbReference>
<dbReference type="InterPro" id="IPR017871">
    <property type="entry name" value="ABC_transporter-like_CS"/>
</dbReference>
<dbReference type="InterPro" id="IPR008995">
    <property type="entry name" value="Mo/tungstate-bd_C_term_dom"/>
</dbReference>
<dbReference type="InterPro" id="IPR027417">
    <property type="entry name" value="P-loop_NTPase"/>
</dbReference>
<dbReference type="InterPro" id="IPR005893">
    <property type="entry name" value="PotA-like"/>
</dbReference>
<dbReference type="InterPro" id="IPR017879">
    <property type="entry name" value="PotA_ATP-bd"/>
</dbReference>
<dbReference type="InterPro" id="IPR013611">
    <property type="entry name" value="Transp-assoc_OB_typ2"/>
</dbReference>
<dbReference type="NCBIfam" id="TIGR01187">
    <property type="entry name" value="potA"/>
    <property type="match status" value="1"/>
</dbReference>
<dbReference type="PANTHER" id="PTHR42781">
    <property type="entry name" value="SPERMIDINE/PUTRESCINE IMPORT ATP-BINDING PROTEIN POTA"/>
    <property type="match status" value="1"/>
</dbReference>
<dbReference type="PANTHER" id="PTHR42781:SF4">
    <property type="entry name" value="SPERMIDINE_PUTRESCINE IMPORT ATP-BINDING PROTEIN POTA"/>
    <property type="match status" value="1"/>
</dbReference>
<dbReference type="Pfam" id="PF00005">
    <property type="entry name" value="ABC_tran"/>
    <property type="match status" value="1"/>
</dbReference>
<dbReference type="Pfam" id="PF08402">
    <property type="entry name" value="TOBE_2"/>
    <property type="match status" value="1"/>
</dbReference>
<dbReference type="SMART" id="SM00382">
    <property type="entry name" value="AAA"/>
    <property type="match status" value="1"/>
</dbReference>
<dbReference type="SUPFAM" id="SSF50331">
    <property type="entry name" value="MOP-like"/>
    <property type="match status" value="1"/>
</dbReference>
<dbReference type="SUPFAM" id="SSF52540">
    <property type="entry name" value="P-loop containing nucleoside triphosphate hydrolases"/>
    <property type="match status" value="1"/>
</dbReference>
<dbReference type="PROSITE" id="PS00211">
    <property type="entry name" value="ABC_TRANSPORTER_1"/>
    <property type="match status" value="1"/>
</dbReference>
<dbReference type="PROSITE" id="PS50893">
    <property type="entry name" value="ABC_TRANSPORTER_2"/>
    <property type="match status" value="1"/>
</dbReference>
<dbReference type="PROSITE" id="PS51305">
    <property type="entry name" value="POTA"/>
    <property type="match status" value="1"/>
</dbReference>
<reference key="1">
    <citation type="journal article" date="2004" name="Nucleic Acids Res.">
        <title>Thermoadaptation trait revealed by the genome sequence of thermophilic Geobacillus kaustophilus.</title>
        <authorList>
            <person name="Takami H."/>
            <person name="Takaki Y."/>
            <person name="Chee G.-J."/>
            <person name="Nishi S."/>
            <person name="Shimamura S."/>
            <person name="Suzuki H."/>
            <person name="Matsui S."/>
            <person name="Uchiyama I."/>
        </authorList>
    </citation>
    <scope>NUCLEOTIDE SEQUENCE [LARGE SCALE GENOMIC DNA]</scope>
    <source>
        <strain>HTA426</strain>
    </source>
</reference>